<name>NADK_STAA9</name>
<proteinExistence type="inferred from homology"/>
<feature type="chain" id="PRO_1000079523" description="NAD kinase">
    <location>
        <begin position="1"/>
        <end position="269"/>
    </location>
</feature>
<feature type="active site" description="Proton acceptor" evidence="1">
    <location>
        <position position="45"/>
    </location>
</feature>
<feature type="binding site" evidence="1">
    <location>
        <begin position="45"/>
        <end position="46"/>
    </location>
    <ligand>
        <name>NAD(+)</name>
        <dbReference type="ChEBI" id="CHEBI:57540"/>
    </ligand>
</feature>
<feature type="binding site" evidence="1">
    <location>
        <begin position="122"/>
        <end position="123"/>
    </location>
    <ligand>
        <name>NAD(+)</name>
        <dbReference type="ChEBI" id="CHEBI:57540"/>
    </ligand>
</feature>
<feature type="binding site" evidence="1">
    <location>
        <position position="149"/>
    </location>
    <ligand>
        <name>NAD(+)</name>
        <dbReference type="ChEBI" id="CHEBI:57540"/>
    </ligand>
</feature>
<feature type="binding site" evidence="1">
    <location>
        <position position="151"/>
    </location>
    <ligand>
        <name>NAD(+)</name>
        <dbReference type="ChEBI" id="CHEBI:57540"/>
    </ligand>
</feature>
<feature type="binding site" evidence="1">
    <location>
        <position position="186"/>
    </location>
    <ligand>
        <name>NAD(+)</name>
        <dbReference type="ChEBI" id="CHEBI:57540"/>
    </ligand>
</feature>
<dbReference type="EC" id="2.7.1.23" evidence="1"/>
<dbReference type="EMBL" id="CP000703">
    <property type="protein sequence ID" value="ABQ48806.1"/>
    <property type="molecule type" value="Genomic_DNA"/>
</dbReference>
<dbReference type="RefSeq" id="WP_001270834.1">
    <property type="nucleotide sequence ID" value="NC_009487.1"/>
</dbReference>
<dbReference type="SMR" id="A5IRI3"/>
<dbReference type="KEGG" id="saj:SaurJH9_1005"/>
<dbReference type="HOGENOM" id="CLU_008831_0_3_9"/>
<dbReference type="GO" id="GO:0005737">
    <property type="term" value="C:cytoplasm"/>
    <property type="evidence" value="ECO:0007669"/>
    <property type="project" value="UniProtKB-SubCell"/>
</dbReference>
<dbReference type="GO" id="GO:0005524">
    <property type="term" value="F:ATP binding"/>
    <property type="evidence" value="ECO:0007669"/>
    <property type="project" value="UniProtKB-KW"/>
</dbReference>
<dbReference type="GO" id="GO:0046872">
    <property type="term" value="F:metal ion binding"/>
    <property type="evidence" value="ECO:0007669"/>
    <property type="project" value="UniProtKB-UniRule"/>
</dbReference>
<dbReference type="GO" id="GO:0051287">
    <property type="term" value="F:NAD binding"/>
    <property type="evidence" value="ECO:0007669"/>
    <property type="project" value="UniProtKB-ARBA"/>
</dbReference>
<dbReference type="GO" id="GO:0003951">
    <property type="term" value="F:NAD+ kinase activity"/>
    <property type="evidence" value="ECO:0007669"/>
    <property type="project" value="UniProtKB-UniRule"/>
</dbReference>
<dbReference type="GO" id="GO:0019674">
    <property type="term" value="P:NAD metabolic process"/>
    <property type="evidence" value="ECO:0007669"/>
    <property type="project" value="InterPro"/>
</dbReference>
<dbReference type="GO" id="GO:0006741">
    <property type="term" value="P:NADP biosynthetic process"/>
    <property type="evidence" value="ECO:0007669"/>
    <property type="project" value="UniProtKB-UniRule"/>
</dbReference>
<dbReference type="FunFam" id="2.60.200.30:FF:000002">
    <property type="entry name" value="NAD kinase"/>
    <property type="match status" value="1"/>
</dbReference>
<dbReference type="Gene3D" id="3.40.50.10330">
    <property type="entry name" value="Probable inorganic polyphosphate/atp-NAD kinase, domain 1"/>
    <property type="match status" value="1"/>
</dbReference>
<dbReference type="Gene3D" id="2.60.200.30">
    <property type="entry name" value="Probable inorganic polyphosphate/atp-NAD kinase, domain 2"/>
    <property type="match status" value="1"/>
</dbReference>
<dbReference type="HAMAP" id="MF_00361">
    <property type="entry name" value="NAD_kinase"/>
    <property type="match status" value="1"/>
</dbReference>
<dbReference type="InterPro" id="IPR017438">
    <property type="entry name" value="ATP-NAD_kinase_N"/>
</dbReference>
<dbReference type="InterPro" id="IPR017437">
    <property type="entry name" value="ATP-NAD_kinase_PpnK-typ_C"/>
</dbReference>
<dbReference type="InterPro" id="IPR016064">
    <property type="entry name" value="NAD/diacylglycerol_kinase_sf"/>
</dbReference>
<dbReference type="InterPro" id="IPR002504">
    <property type="entry name" value="NADK"/>
</dbReference>
<dbReference type="NCBIfam" id="NF003424">
    <property type="entry name" value="PRK04885.1"/>
    <property type="match status" value="1"/>
</dbReference>
<dbReference type="PANTHER" id="PTHR20275">
    <property type="entry name" value="NAD KINASE"/>
    <property type="match status" value="1"/>
</dbReference>
<dbReference type="PANTHER" id="PTHR20275:SF0">
    <property type="entry name" value="NAD KINASE"/>
    <property type="match status" value="1"/>
</dbReference>
<dbReference type="Pfam" id="PF01513">
    <property type="entry name" value="NAD_kinase"/>
    <property type="match status" value="1"/>
</dbReference>
<dbReference type="Pfam" id="PF20143">
    <property type="entry name" value="NAD_kinase_C"/>
    <property type="match status" value="1"/>
</dbReference>
<dbReference type="SUPFAM" id="SSF111331">
    <property type="entry name" value="NAD kinase/diacylglycerol kinase-like"/>
    <property type="match status" value="1"/>
</dbReference>
<evidence type="ECO:0000255" key="1">
    <source>
        <dbReference type="HAMAP-Rule" id="MF_00361"/>
    </source>
</evidence>
<keyword id="KW-0067">ATP-binding</keyword>
<keyword id="KW-0963">Cytoplasm</keyword>
<keyword id="KW-0418">Kinase</keyword>
<keyword id="KW-0520">NAD</keyword>
<keyword id="KW-0521">NADP</keyword>
<keyword id="KW-0547">Nucleotide-binding</keyword>
<keyword id="KW-0808">Transferase</keyword>
<sequence>MRYTILTKGDSKSNALKHKMMNYMKDFRMIEDSENPEIVISVGGDGTLLQAFHQYSHMLSKVAFVGVHTGHLGFYADWLPHEVEKLIIEINNSEFQVIEYPLLEIIMRYNDNGYETRYLALNEATMKTENGSTLVVDVNLRGKHFERFRGDGLCVSTPSGSTAYNKALGGALIHPSLEAMQITEIASINNRVFRTVGSPLVLPKHHTCLISPVNHDTIRMTIDHVSIKHKNVNSIQYRVANEKVRFARFRPFPFWKRVHDSFISSDEER</sequence>
<reference key="1">
    <citation type="submission" date="2007-05" db="EMBL/GenBank/DDBJ databases">
        <title>Complete sequence of chromosome of Staphylococcus aureus subsp. aureus JH9.</title>
        <authorList>
            <consortium name="US DOE Joint Genome Institute"/>
            <person name="Copeland A."/>
            <person name="Lucas S."/>
            <person name="Lapidus A."/>
            <person name="Barry K."/>
            <person name="Detter J.C."/>
            <person name="Glavina del Rio T."/>
            <person name="Hammon N."/>
            <person name="Israni S."/>
            <person name="Pitluck S."/>
            <person name="Chain P."/>
            <person name="Malfatti S."/>
            <person name="Shin M."/>
            <person name="Vergez L."/>
            <person name="Schmutz J."/>
            <person name="Larimer F."/>
            <person name="Land M."/>
            <person name="Hauser L."/>
            <person name="Kyrpides N."/>
            <person name="Kim E."/>
            <person name="Tomasz A."/>
            <person name="Richardson P."/>
        </authorList>
    </citation>
    <scope>NUCLEOTIDE SEQUENCE [LARGE SCALE GENOMIC DNA]</scope>
    <source>
        <strain>JH9</strain>
    </source>
</reference>
<organism>
    <name type="scientific">Staphylococcus aureus (strain JH9)</name>
    <dbReference type="NCBI Taxonomy" id="359786"/>
    <lineage>
        <taxon>Bacteria</taxon>
        <taxon>Bacillati</taxon>
        <taxon>Bacillota</taxon>
        <taxon>Bacilli</taxon>
        <taxon>Bacillales</taxon>
        <taxon>Staphylococcaceae</taxon>
        <taxon>Staphylococcus</taxon>
    </lineage>
</organism>
<comment type="function">
    <text evidence="1">Involved in the regulation of the intracellular balance of NAD and NADP, and is a key enzyme in the biosynthesis of NADP. Catalyzes specifically the phosphorylation on 2'-hydroxyl of the adenosine moiety of NAD to yield NADP.</text>
</comment>
<comment type="catalytic activity">
    <reaction evidence="1">
        <text>NAD(+) + ATP = ADP + NADP(+) + H(+)</text>
        <dbReference type="Rhea" id="RHEA:18629"/>
        <dbReference type="ChEBI" id="CHEBI:15378"/>
        <dbReference type="ChEBI" id="CHEBI:30616"/>
        <dbReference type="ChEBI" id="CHEBI:57540"/>
        <dbReference type="ChEBI" id="CHEBI:58349"/>
        <dbReference type="ChEBI" id="CHEBI:456216"/>
        <dbReference type="EC" id="2.7.1.23"/>
    </reaction>
</comment>
<comment type="cofactor">
    <cofactor evidence="1">
        <name>a divalent metal cation</name>
        <dbReference type="ChEBI" id="CHEBI:60240"/>
    </cofactor>
</comment>
<comment type="subcellular location">
    <subcellularLocation>
        <location evidence="1">Cytoplasm</location>
    </subcellularLocation>
</comment>
<comment type="similarity">
    <text evidence="1">Belongs to the NAD kinase family.</text>
</comment>
<protein>
    <recommendedName>
        <fullName evidence="1">NAD kinase</fullName>
        <ecNumber evidence="1">2.7.1.23</ecNumber>
    </recommendedName>
    <alternativeName>
        <fullName evidence="1">ATP-dependent NAD kinase</fullName>
    </alternativeName>
</protein>
<accession>A5IRI3</accession>
<gene>
    <name evidence="1" type="primary">nadK</name>
    <name type="ordered locus">SaurJH9_1005</name>
</gene>